<gene>
    <name evidence="1" type="primary">rsmC</name>
    <name type="ordered locus">BUsg_319</name>
</gene>
<feature type="chain" id="PRO_0000097488" description="Ribosomal RNA small subunit methyltransferase C">
    <location>
        <begin position="1"/>
        <end position="336"/>
    </location>
</feature>
<dbReference type="EC" id="2.1.1.172" evidence="1"/>
<dbReference type="EMBL" id="AE013218">
    <property type="protein sequence ID" value="AAM67873.1"/>
    <property type="status" value="ALT_INIT"/>
    <property type="molecule type" value="Genomic_DNA"/>
</dbReference>
<dbReference type="RefSeq" id="WP_011053840.1">
    <property type="nucleotide sequence ID" value="NC_004061.1"/>
</dbReference>
<dbReference type="SMR" id="Q8K9L5"/>
<dbReference type="STRING" id="198804.BUsg_319"/>
<dbReference type="GeneID" id="93003788"/>
<dbReference type="KEGG" id="bas:BUsg_319"/>
<dbReference type="eggNOG" id="COG2813">
    <property type="taxonomic scope" value="Bacteria"/>
</dbReference>
<dbReference type="HOGENOM" id="CLU_1377143_0_0_6"/>
<dbReference type="Proteomes" id="UP000000416">
    <property type="component" value="Chromosome"/>
</dbReference>
<dbReference type="GO" id="GO:0005737">
    <property type="term" value="C:cytoplasm"/>
    <property type="evidence" value="ECO:0007669"/>
    <property type="project" value="UniProtKB-SubCell"/>
</dbReference>
<dbReference type="GO" id="GO:0052914">
    <property type="term" value="F:16S rRNA (guanine(1207)-N(2))-methyltransferase activity"/>
    <property type="evidence" value="ECO:0007669"/>
    <property type="project" value="UniProtKB-EC"/>
</dbReference>
<dbReference type="CDD" id="cd02440">
    <property type="entry name" value="AdoMet_MTases"/>
    <property type="match status" value="1"/>
</dbReference>
<dbReference type="Gene3D" id="3.40.50.150">
    <property type="entry name" value="Vaccinia Virus protein VP39"/>
    <property type="match status" value="2"/>
</dbReference>
<dbReference type="HAMAP" id="MF_01862">
    <property type="entry name" value="16SrRNA_methyltr_C"/>
    <property type="match status" value="1"/>
</dbReference>
<dbReference type="InterPro" id="IPR013675">
    <property type="entry name" value="Mtase_sm_N"/>
</dbReference>
<dbReference type="InterPro" id="IPR023543">
    <property type="entry name" value="rRNA_ssu_MeTfrase_C"/>
</dbReference>
<dbReference type="InterPro" id="IPR046977">
    <property type="entry name" value="RsmC/RlmG"/>
</dbReference>
<dbReference type="InterPro" id="IPR029063">
    <property type="entry name" value="SAM-dependent_MTases_sf"/>
</dbReference>
<dbReference type="InterPro" id="IPR007848">
    <property type="entry name" value="Small_mtfrase_dom"/>
</dbReference>
<dbReference type="NCBIfam" id="NF007023">
    <property type="entry name" value="PRK09489.1"/>
    <property type="match status" value="1"/>
</dbReference>
<dbReference type="PANTHER" id="PTHR47816">
    <property type="entry name" value="RIBOSOMAL RNA SMALL SUBUNIT METHYLTRANSFERASE C"/>
    <property type="match status" value="1"/>
</dbReference>
<dbReference type="PANTHER" id="PTHR47816:SF4">
    <property type="entry name" value="RIBOSOMAL RNA SMALL SUBUNIT METHYLTRANSFERASE C"/>
    <property type="match status" value="1"/>
</dbReference>
<dbReference type="Pfam" id="PF05175">
    <property type="entry name" value="MTS"/>
    <property type="match status" value="1"/>
</dbReference>
<dbReference type="Pfam" id="PF08468">
    <property type="entry name" value="MTS_N"/>
    <property type="match status" value="1"/>
</dbReference>
<dbReference type="SUPFAM" id="SSF53335">
    <property type="entry name" value="S-adenosyl-L-methionine-dependent methyltransferases"/>
    <property type="match status" value="1"/>
</dbReference>
<protein>
    <recommendedName>
        <fullName evidence="1">Ribosomal RNA small subunit methyltransferase C</fullName>
        <ecNumber evidence="1">2.1.1.172</ecNumber>
    </recommendedName>
    <alternativeName>
        <fullName evidence="1">16S rRNA m2G1207 methyltransferase</fullName>
    </alternativeName>
    <alternativeName>
        <fullName evidence="1">rRNA (guanine-N(2)-)-methyltransferase RsmC</fullName>
    </alternativeName>
</protein>
<name>RSMC_BUCAP</name>
<organism>
    <name type="scientific">Buchnera aphidicola subsp. Schizaphis graminum (strain Sg)</name>
    <dbReference type="NCBI Taxonomy" id="198804"/>
    <lineage>
        <taxon>Bacteria</taxon>
        <taxon>Pseudomonadati</taxon>
        <taxon>Pseudomonadota</taxon>
        <taxon>Gammaproteobacteria</taxon>
        <taxon>Enterobacterales</taxon>
        <taxon>Erwiniaceae</taxon>
        <taxon>Buchnera</taxon>
    </lineage>
</organism>
<comment type="function">
    <text evidence="1">Specifically methylates the guanine in position 1207 of 16S rRNA in the 30S particle.</text>
</comment>
<comment type="catalytic activity">
    <reaction evidence="1">
        <text>guanosine(1207) in 16S rRNA + S-adenosyl-L-methionine = N(2)-methylguanosine(1207) in 16S rRNA + S-adenosyl-L-homocysteine + H(+)</text>
        <dbReference type="Rhea" id="RHEA:42736"/>
        <dbReference type="Rhea" id="RHEA-COMP:10213"/>
        <dbReference type="Rhea" id="RHEA-COMP:10214"/>
        <dbReference type="ChEBI" id="CHEBI:15378"/>
        <dbReference type="ChEBI" id="CHEBI:57856"/>
        <dbReference type="ChEBI" id="CHEBI:59789"/>
        <dbReference type="ChEBI" id="CHEBI:74269"/>
        <dbReference type="ChEBI" id="CHEBI:74481"/>
        <dbReference type="EC" id="2.1.1.172"/>
    </reaction>
</comment>
<comment type="subunit">
    <text evidence="1">Monomer.</text>
</comment>
<comment type="subcellular location">
    <subcellularLocation>
        <location evidence="1">Cytoplasm</location>
    </subcellularLocation>
</comment>
<comment type="similarity">
    <text evidence="1">Belongs to the methyltransferase superfamily. RsmC family.</text>
</comment>
<comment type="sequence caution" evidence="2">
    <conflict type="erroneous initiation">
        <sequence resource="EMBL-CDS" id="AAM67873"/>
    </conflict>
</comment>
<evidence type="ECO:0000255" key="1">
    <source>
        <dbReference type="HAMAP-Rule" id="MF_01862"/>
    </source>
</evidence>
<evidence type="ECO:0000305" key="2"/>
<sequence>MIFSKNSQLILRHQKIFKNKIVFFSGNIEDELPINLLTIKTKIHLQKSQNFLKINNNKNITFYRKLLVSQDTVQDCNILIYYWPKNKSEARFQLFNILSFLPIKSEIFIVGSNSSGVKSAKLILEESIKLKKIDNANHSILMSGILINKTKFKLEKFFKIHIWKNLIIKSLPGVFGHKKIDEGSKFIASTFSEKINGKILDVGCGSGFLSVSILRKSPKCVVTMIDRKLSALESSKATLDANFFKGEVLSSNIYSNIFKKFNMIVSNPPLHDDLKINFDITKKIIFNSKKHLKKNGELRFVTNHCFSYDFYLKKVFSEFHIMKKDNKYKVYQAFLK</sequence>
<proteinExistence type="inferred from homology"/>
<keyword id="KW-0963">Cytoplasm</keyword>
<keyword id="KW-0489">Methyltransferase</keyword>
<keyword id="KW-0698">rRNA processing</keyword>
<keyword id="KW-0949">S-adenosyl-L-methionine</keyword>
<keyword id="KW-0808">Transferase</keyword>
<accession>Q8K9L5</accession>
<reference key="1">
    <citation type="journal article" date="2002" name="Science">
        <title>50 million years of genomic stasis in endosymbiotic bacteria.</title>
        <authorList>
            <person name="Tamas I."/>
            <person name="Klasson L."/>
            <person name="Canbaeck B."/>
            <person name="Naeslund A.K."/>
            <person name="Eriksson A.-S."/>
            <person name="Wernegreen J.J."/>
            <person name="Sandstroem J.P."/>
            <person name="Moran N.A."/>
            <person name="Andersson S.G.E."/>
        </authorList>
    </citation>
    <scope>NUCLEOTIDE SEQUENCE [LARGE SCALE GENOMIC DNA]</scope>
    <source>
        <strain>Sg</strain>
    </source>
</reference>